<accession>Q8NC44</accession>
<accession>Q6P1P5</accession>
<accession>Q9H0K7</accession>
<evidence type="ECO:0000250" key="1">
    <source>
        <dbReference type="UniProtKB" id="Q6NS82"/>
    </source>
</evidence>
<evidence type="ECO:0000255" key="2"/>
<evidence type="ECO:0000256" key="3">
    <source>
        <dbReference type="SAM" id="MobiDB-lite"/>
    </source>
</evidence>
<evidence type="ECO:0000269" key="4">
    <source>
    </source>
</evidence>
<evidence type="ECO:0000269" key="5">
    <source>
    </source>
</evidence>
<evidence type="ECO:0000269" key="6">
    <source>
    </source>
</evidence>
<evidence type="ECO:0000269" key="7">
    <source>
    </source>
</evidence>
<evidence type="ECO:0000269" key="8">
    <source>
    </source>
</evidence>
<evidence type="ECO:0000305" key="9"/>
<evidence type="ECO:0000305" key="10">
    <source>
    </source>
</evidence>
<evidence type="ECO:0000312" key="11">
    <source>
        <dbReference type="HGNC" id="HGNC:28450"/>
    </source>
</evidence>
<evidence type="ECO:0007744" key="12">
    <source>
    </source>
</evidence>
<evidence type="ECO:0007744" key="13">
    <source>
    </source>
</evidence>
<evidence type="ECO:0007744" key="14">
    <source>
    </source>
</evidence>
<evidence type="ECO:0007744" key="15">
    <source>
    </source>
</evidence>
<evidence type="ECO:0007744" key="16">
    <source>
    </source>
</evidence>
<evidence type="ECO:0007744" key="17">
    <source>
    </source>
</evidence>
<evidence type="ECO:0007744" key="18">
    <source>
    </source>
</evidence>
<evidence type="ECO:0007744" key="19">
    <source>
    </source>
</evidence>
<evidence type="ECO:0007744" key="20">
    <source>
    </source>
</evidence>
<protein>
    <recommendedName>
        <fullName evidence="11">Reticulophagy regulator 2</fullName>
    </recommendedName>
</protein>
<sequence length="543" mass="57830">MASGGGGGNTGAGGGPGMGLSLGLGLGLSLGMSEATSEAEEEAATAEAVGRLATTLWLRLRGWEAVLAAAQRLLVWEKPLHSLVTAAALNGLFWLLSSSSLRPFFLLSVSLLAYFLLDLWQPRFLPDVSASSPEEPHSDSEGAGSGARPHLLSVPELCRYLAESWLTFQIHLQELLQYKRQNPAQFCVRVCSGCAVLAVLGHYVPGIMISYIVLLSILLWPLVVYHELIQRMYTRLEPLLMQLDYSMKAEANALHHKHDKRKRQGKNAPPGGDEPLAETESESEAELAGFSPVVDVKKTALALAITDSELSDEEASILESGGFSVSRATTPQLTDVSEDLDQQSLPSEPEETLSRDLGEGEEGELAPPEDLLGRPQALSRQALDSEEEEEDVAAKETLLRLSSPLHFVNTHFNGAGSPPDGVKCSPGGPVETLSPETVSGGLTALPGTLSPPLCLVGSDPAPSPSILPPVPQDSPQPLPAPEEEEALTTEDFELLDQGELEQLNAELGLEPETPPKPPDAPPLGPDIHSLVQSDQEAQAVAEP</sequence>
<feature type="chain" id="PRO_0000089346" description="Reticulophagy regulator 2">
    <location>
        <begin position="1"/>
        <end position="543"/>
    </location>
</feature>
<feature type="transmembrane region" description="Helical" evidence="2">
    <location>
        <begin position="12"/>
        <end position="32"/>
    </location>
</feature>
<feature type="transmembrane region" description="Helical" evidence="2">
    <location>
        <begin position="100"/>
        <end position="120"/>
    </location>
</feature>
<feature type="transmembrane region" description="Helical" evidence="2">
    <location>
        <begin position="204"/>
        <end position="224"/>
    </location>
</feature>
<feature type="region of interest" description="Disordered" evidence="3">
    <location>
        <begin position="254"/>
        <end position="287"/>
    </location>
</feature>
<feature type="region of interest" description="Disordered" evidence="3">
    <location>
        <begin position="336"/>
        <end position="394"/>
    </location>
</feature>
<feature type="region of interest" description="Disordered" evidence="3">
    <location>
        <begin position="411"/>
        <end position="486"/>
    </location>
</feature>
<feature type="region of interest" description="Disordered" evidence="3">
    <location>
        <begin position="504"/>
        <end position="543"/>
    </location>
</feature>
<feature type="short sequence motif" description="LIR motif" evidence="10">
    <location>
        <begin position="490"/>
        <end position="495"/>
    </location>
</feature>
<feature type="compositionally biased region" description="Basic residues" evidence="3">
    <location>
        <begin position="254"/>
        <end position="265"/>
    </location>
</feature>
<feature type="compositionally biased region" description="Acidic residues" evidence="3">
    <location>
        <begin position="275"/>
        <end position="285"/>
    </location>
</feature>
<feature type="compositionally biased region" description="Pro residues" evidence="3">
    <location>
        <begin position="461"/>
        <end position="480"/>
    </location>
</feature>
<feature type="compositionally biased region" description="Pro residues" evidence="3">
    <location>
        <begin position="512"/>
        <end position="524"/>
    </location>
</feature>
<feature type="modified residue" description="Phosphothreonine" evidence="15">
    <location>
        <position position="279"/>
    </location>
</feature>
<feature type="modified residue" description="Phosphoserine" evidence="15">
    <location>
        <position position="281"/>
    </location>
</feature>
<feature type="modified residue" description="Phosphoserine" evidence="15">
    <location>
        <position position="283"/>
    </location>
</feature>
<feature type="modified residue" description="Phosphoserine" evidence="20">
    <location>
        <position position="291"/>
    </location>
</feature>
<feature type="modified residue" description="Phosphoserine" evidence="12 20">
    <location>
        <position position="311"/>
    </location>
</feature>
<feature type="modified residue" description="Phosphothreonine" evidence="1">
    <location>
        <position position="334"/>
    </location>
</feature>
<feature type="modified residue" description="Phosphoserine" evidence="1">
    <location>
        <position position="337"/>
    </location>
</feature>
<feature type="modified residue" description="Phosphoserine" evidence="16">
    <location>
        <position position="344"/>
    </location>
</feature>
<feature type="modified residue" description="Phosphoserine" evidence="16 20">
    <location>
        <position position="347"/>
    </location>
</feature>
<feature type="modified residue" description="Phosphoserine" evidence="12 13 14 17 18 19 20">
    <location>
        <position position="385"/>
    </location>
</feature>
<feature type="sequence variant" id="VAR_033720" description="In dbSNP:rs3210652.">
    <original>R</original>
    <variation>H</variation>
    <location>
        <position position="374"/>
    </location>
</feature>
<feature type="sequence variant" id="VAR_022835" description="In dbSNP:rs3731900." evidence="4 5 15">
    <original>P</original>
    <variation>Q</variation>
    <location>
        <position position="419"/>
    </location>
</feature>
<feature type="mutagenesis site" description="Abolishes interaction with ATG8 family proteins, induction of ER fragmentation and ER degradation." evidence="7">
    <original>FELL</original>
    <variation>AELA</variation>
    <location>
        <begin position="492"/>
        <end position="495"/>
    </location>
</feature>
<feature type="sequence conflict" description="In Ref. 1; BAC11332." evidence="9" ref="1">
    <original>E</original>
    <variation>G</variation>
    <location>
        <position position="338"/>
    </location>
</feature>
<reference key="1">
    <citation type="journal article" date="2004" name="Nat. Genet.">
        <title>Complete sequencing and characterization of 21,243 full-length human cDNAs.</title>
        <authorList>
            <person name="Ota T."/>
            <person name="Suzuki Y."/>
            <person name="Nishikawa T."/>
            <person name="Otsuki T."/>
            <person name="Sugiyama T."/>
            <person name="Irie R."/>
            <person name="Wakamatsu A."/>
            <person name="Hayashi K."/>
            <person name="Sato H."/>
            <person name="Nagai K."/>
            <person name="Kimura K."/>
            <person name="Makita H."/>
            <person name="Sekine M."/>
            <person name="Obayashi M."/>
            <person name="Nishi T."/>
            <person name="Shibahara T."/>
            <person name="Tanaka T."/>
            <person name="Ishii S."/>
            <person name="Yamamoto J."/>
            <person name="Saito K."/>
            <person name="Kawai Y."/>
            <person name="Isono Y."/>
            <person name="Nakamura Y."/>
            <person name="Nagahari K."/>
            <person name="Murakami K."/>
            <person name="Yasuda T."/>
            <person name="Iwayanagi T."/>
            <person name="Wagatsuma M."/>
            <person name="Shiratori A."/>
            <person name="Sudo H."/>
            <person name="Hosoiri T."/>
            <person name="Kaku Y."/>
            <person name="Kodaira H."/>
            <person name="Kondo H."/>
            <person name="Sugawara M."/>
            <person name="Takahashi M."/>
            <person name="Kanda K."/>
            <person name="Yokoi T."/>
            <person name="Furuya T."/>
            <person name="Kikkawa E."/>
            <person name="Omura Y."/>
            <person name="Abe K."/>
            <person name="Kamihara K."/>
            <person name="Katsuta N."/>
            <person name="Sato K."/>
            <person name="Tanikawa M."/>
            <person name="Yamazaki M."/>
            <person name="Ninomiya K."/>
            <person name="Ishibashi T."/>
            <person name="Yamashita H."/>
            <person name="Murakawa K."/>
            <person name="Fujimori K."/>
            <person name="Tanai H."/>
            <person name="Kimata M."/>
            <person name="Watanabe M."/>
            <person name="Hiraoka S."/>
            <person name="Chiba Y."/>
            <person name="Ishida S."/>
            <person name="Ono Y."/>
            <person name="Takiguchi S."/>
            <person name="Watanabe S."/>
            <person name="Yosida M."/>
            <person name="Hotuta T."/>
            <person name="Kusano J."/>
            <person name="Kanehori K."/>
            <person name="Takahashi-Fujii A."/>
            <person name="Hara H."/>
            <person name="Tanase T.-O."/>
            <person name="Nomura Y."/>
            <person name="Togiya S."/>
            <person name="Komai F."/>
            <person name="Hara R."/>
            <person name="Takeuchi K."/>
            <person name="Arita M."/>
            <person name="Imose N."/>
            <person name="Musashino K."/>
            <person name="Yuuki H."/>
            <person name="Oshima A."/>
            <person name="Sasaki N."/>
            <person name="Aotsuka S."/>
            <person name="Yoshikawa Y."/>
            <person name="Matsunawa H."/>
            <person name="Ichihara T."/>
            <person name="Shiohata N."/>
            <person name="Sano S."/>
            <person name="Moriya S."/>
            <person name="Momiyama H."/>
            <person name="Satoh N."/>
            <person name="Takami S."/>
            <person name="Terashima Y."/>
            <person name="Suzuki O."/>
            <person name="Nakagawa S."/>
            <person name="Senoh A."/>
            <person name="Mizoguchi H."/>
            <person name="Goto Y."/>
            <person name="Shimizu F."/>
            <person name="Wakebe H."/>
            <person name="Hishigaki H."/>
            <person name="Watanabe T."/>
            <person name="Sugiyama A."/>
            <person name="Takemoto M."/>
            <person name="Kawakami B."/>
            <person name="Yamazaki M."/>
            <person name="Watanabe K."/>
            <person name="Kumagai A."/>
            <person name="Itakura S."/>
            <person name="Fukuzumi Y."/>
            <person name="Fujimori Y."/>
            <person name="Komiyama M."/>
            <person name="Tashiro H."/>
            <person name="Tanigami A."/>
            <person name="Fujiwara T."/>
            <person name="Ono T."/>
            <person name="Yamada K."/>
            <person name="Fujii Y."/>
            <person name="Ozaki K."/>
            <person name="Hirao M."/>
            <person name="Ohmori Y."/>
            <person name="Kawabata A."/>
            <person name="Hikiji T."/>
            <person name="Kobatake N."/>
            <person name="Inagaki H."/>
            <person name="Ikema Y."/>
            <person name="Okamoto S."/>
            <person name="Okitani R."/>
            <person name="Kawakami T."/>
            <person name="Noguchi S."/>
            <person name="Itoh T."/>
            <person name="Shigeta K."/>
            <person name="Senba T."/>
            <person name="Matsumura K."/>
            <person name="Nakajima Y."/>
            <person name="Mizuno T."/>
            <person name="Morinaga M."/>
            <person name="Sasaki M."/>
            <person name="Togashi T."/>
            <person name="Oyama M."/>
            <person name="Hata H."/>
            <person name="Watanabe M."/>
            <person name="Komatsu T."/>
            <person name="Mizushima-Sugano J."/>
            <person name="Satoh T."/>
            <person name="Shirai Y."/>
            <person name="Takahashi Y."/>
            <person name="Nakagawa K."/>
            <person name="Okumura K."/>
            <person name="Nagase T."/>
            <person name="Nomura N."/>
            <person name="Kikuchi H."/>
            <person name="Masuho Y."/>
            <person name="Yamashita R."/>
            <person name="Nakai K."/>
            <person name="Yada T."/>
            <person name="Nakamura Y."/>
            <person name="Ohara O."/>
            <person name="Isogai T."/>
            <person name="Sugano S."/>
        </authorList>
    </citation>
    <scope>NUCLEOTIDE SEQUENCE [LARGE SCALE MRNA]</scope>
    <scope>VARIANT GLN-419</scope>
</reference>
<reference key="2">
    <citation type="journal article" date="2005" name="Nature">
        <title>Generation and annotation of the DNA sequences of human chromosomes 2 and 4.</title>
        <authorList>
            <person name="Hillier L.W."/>
            <person name="Graves T.A."/>
            <person name="Fulton R.S."/>
            <person name="Fulton L.A."/>
            <person name="Pepin K.H."/>
            <person name="Minx P."/>
            <person name="Wagner-McPherson C."/>
            <person name="Layman D."/>
            <person name="Wylie K."/>
            <person name="Sekhon M."/>
            <person name="Becker M.C."/>
            <person name="Fewell G.A."/>
            <person name="Delehaunty K.D."/>
            <person name="Miner T.L."/>
            <person name="Nash W.E."/>
            <person name="Kremitzki C."/>
            <person name="Oddy L."/>
            <person name="Du H."/>
            <person name="Sun H."/>
            <person name="Bradshaw-Cordum H."/>
            <person name="Ali J."/>
            <person name="Carter J."/>
            <person name="Cordes M."/>
            <person name="Harris A."/>
            <person name="Isak A."/>
            <person name="van Brunt A."/>
            <person name="Nguyen C."/>
            <person name="Du F."/>
            <person name="Courtney L."/>
            <person name="Kalicki J."/>
            <person name="Ozersky P."/>
            <person name="Abbott S."/>
            <person name="Armstrong J."/>
            <person name="Belter E.A."/>
            <person name="Caruso L."/>
            <person name="Cedroni M."/>
            <person name="Cotton M."/>
            <person name="Davidson T."/>
            <person name="Desai A."/>
            <person name="Elliott G."/>
            <person name="Erb T."/>
            <person name="Fronick C."/>
            <person name="Gaige T."/>
            <person name="Haakenson W."/>
            <person name="Haglund K."/>
            <person name="Holmes A."/>
            <person name="Harkins R."/>
            <person name="Kim K."/>
            <person name="Kruchowski S.S."/>
            <person name="Strong C.M."/>
            <person name="Grewal N."/>
            <person name="Goyea E."/>
            <person name="Hou S."/>
            <person name="Levy A."/>
            <person name="Martinka S."/>
            <person name="Mead K."/>
            <person name="McLellan M.D."/>
            <person name="Meyer R."/>
            <person name="Randall-Maher J."/>
            <person name="Tomlinson C."/>
            <person name="Dauphin-Kohlberg S."/>
            <person name="Kozlowicz-Reilly A."/>
            <person name="Shah N."/>
            <person name="Swearengen-Shahid S."/>
            <person name="Snider J."/>
            <person name="Strong J.T."/>
            <person name="Thompson J."/>
            <person name="Yoakum M."/>
            <person name="Leonard S."/>
            <person name="Pearman C."/>
            <person name="Trani L."/>
            <person name="Radionenko M."/>
            <person name="Waligorski J.E."/>
            <person name="Wang C."/>
            <person name="Rock S.M."/>
            <person name="Tin-Wollam A.-M."/>
            <person name="Maupin R."/>
            <person name="Latreille P."/>
            <person name="Wendl M.C."/>
            <person name="Yang S.-P."/>
            <person name="Pohl C."/>
            <person name="Wallis J.W."/>
            <person name="Spieth J."/>
            <person name="Bieri T.A."/>
            <person name="Berkowicz N."/>
            <person name="Nelson J.O."/>
            <person name="Osborne J."/>
            <person name="Ding L."/>
            <person name="Meyer R."/>
            <person name="Sabo A."/>
            <person name="Shotland Y."/>
            <person name="Sinha P."/>
            <person name="Wohldmann P.E."/>
            <person name="Cook L.L."/>
            <person name="Hickenbotham M.T."/>
            <person name="Eldred J."/>
            <person name="Williams D."/>
            <person name="Jones T.A."/>
            <person name="She X."/>
            <person name="Ciccarelli F.D."/>
            <person name="Izaurralde E."/>
            <person name="Taylor J."/>
            <person name="Schmutz J."/>
            <person name="Myers R.M."/>
            <person name="Cox D.R."/>
            <person name="Huang X."/>
            <person name="McPherson J.D."/>
            <person name="Mardis E.R."/>
            <person name="Clifton S.W."/>
            <person name="Warren W.C."/>
            <person name="Chinwalla A.T."/>
            <person name="Eddy S.R."/>
            <person name="Marra M.A."/>
            <person name="Ovcharenko I."/>
            <person name="Furey T.S."/>
            <person name="Miller W."/>
            <person name="Eichler E.E."/>
            <person name="Bork P."/>
            <person name="Suyama M."/>
            <person name="Torrents D."/>
            <person name="Waterston R.H."/>
            <person name="Wilson R.K."/>
        </authorList>
    </citation>
    <scope>NUCLEOTIDE SEQUENCE [LARGE SCALE GENOMIC DNA]</scope>
</reference>
<reference key="3">
    <citation type="journal article" date="2004" name="Genome Res.">
        <title>The status, quality, and expansion of the NIH full-length cDNA project: the Mammalian Gene Collection (MGC).</title>
        <authorList>
            <consortium name="The MGC Project Team"/>
        </authorList>
    </citation>
    <scope>NUCLEOTIDE SEQUENCE [LARGE SCALE MRNA] OF 262-543</scope>
    <scope>VARIANT GLN-419</scope>
    <source>
        <tissue>Skin</tissue>
    </source>
</reference>
<reference key="4">
    <citation type="journal article" date="2001" name="Genome Res.">
        <title>Towards a catalog of human genes and proteins: sequencing and analysis of 500 novel complete protein coding human cDNAs.</title>
        <authorList>
            <person name="Wiemann S."/>
            <person name="Weil B."/>
            <person name="Wellenreuther R."/>
            <person name="Gassenhuber J."/>
            <person name="Glassl S."/>
            <person name="Ansorge W."/>
            <person name="Boecher M."/>
            <person name="Bloecker H."/>
            <person name="Bauersachs S."/>
            <person name="Blum H."/>
            <person name="Lauber J."/>
            <person name="Duesterhoeft A."/>
            <person name="Beyer A."/>
            <person name="Koehrer K."/>
            <person name="Strack N."/>
            <person name="Mewes H.-W."/>
            <person name="Ottenwaelder B."/>
            <person name="Obermaier B."/>
            <person name="Tampe J."/>
            <person name="Heubner D."/>
            <person name="Wambutt R."/>
            <person name="Korn B."/>
            <person name="Klein M."/>
            <person name="Poustka A."/>
        </authorList>
    </citation>
    <scope>NUCLEOTIDE SEQUENCE [LARGE SCALE MRNA] OF 431-543</scope>
    <source>
        <tissue>Testis</tissue>
    </source>
</reference>
<reference key="5">
    <citation type="journal article" date="2007" name="BMC Genomics">
        <title>The full-ORF clone resource of the German cDNA consortium.</title>
        <authorList>
            <person name="Bechtel S."/>
            <person name="Rosenfelder H."/>
            <person name="Duda A."/>
            <person name="Schmidt C.P."/>
            <person name="Ernst U."/>
            <person name="Wellenreuther R."/>
            <person name="Mehrle A."/>
            <person name="Schuster C."/>
            <person name="Bahr A."/>
            <person name="Bloecker H."/>
            <person name="Heubner D."/>
            <person name="Hoerlein A."/>
            <person name="Michel G."/>
            <person name="Wedler H."/>
            <person name="Koehrer K."/>
            <person name="Ottenwaelder B."/>
            <person name="Poustka A."/>
            <person name="Wiemann S."/>
            <person name="Schupp I."/>
        </authorList>
    </citation>
    <scope>SEQUENCE REVISION</scope>
</reference>
<reference key="6">
    <citation type="journal article" date="2006" name="Cell">
        <title>Global, in vivo, and site-specific phosphorylation dynamics in signaling networks.</title>
        <authorList>
            <person name="Olsen J.V."/>
            <person name="Blagoev B."/>
            <person name="Gnad F."/>
            <person name="Macek B."/>
            <person name="Kumar C."/>
            <person name="Mortensen P."/>
            <person name="Mann M."/>
        </authorList>
    </citation>
    <scope>PHOSPHORYLATION [LARGE SCALE ANALYSIS] AT SER-311 AND SER-385</scope>
    <scope>IDENTIFICATION BY MASS SPECTROMETRY [LARGE SCALE ANALYSIS]</scope>
    <source>
        <tissue>Cervix carcinoma</tissue>
    </source>
</reference>
<reference key="7">
    <citation type="journal article" date="2008" name="J. Proteome Res.">
        <title>Phosphoproteome of resting human platelets.</title>
        <authorList>
            <person name="Zahedi R.P."/>
            <person name="Lewandrowski U."/>
            <person name="Wiesner J."/>
            <person name="Wortelkamp S."/>
            <person name="Moebius J."/>
            <person name="Schuetz C."/>
            <person name="Walter U."/>
            <person name="Gambaryan S."/>
            <person name="Sickmann A."/>
        </authorList>
    </citation>
    <scope>PHOSPHORYLATION [LARGE SCALE ANALYSIS] AT SER-385</scope>
    <scope>IDENTIFICATION BY MASS SPECTROMETRY [LARGE SCALE ANALYSIS]</scope>
    <source>
        <tissue>Platelet</tissue>
    </source>
</reference>
<reference key="8">
    <citation type="journal article" date="2008" name="Proc. Natl. Acad. Sci. U.S.A.">
        <title>A quantitative atlas of mitotic phosphorylation.</title>
        <authorList>
            <person name="Dephoure N."/>
            <person name="Zhou C."/>
            <person name="Villen J."/>
            <person name="Beausoleil S.A."/>
            <person name="Bakalarski C.E."/>
            <person name="Elledge S.J."/>
            <person name="Gygi S.P."/>
        </authorList>
    </citation>
    <scope>PHOSPHORYLATION [LARGE SCALE ANALYSIS] AT THR-279; SER-281 AND SER-283</scope>
    <scope>VARIANT [LARGE SCALE ANALYSIS] GLN-419</scope>
    <scope>IDENTIFICATION BY MASS SPECTROMETRY [LARGE SCALE ANALYSIS]</scope>
    <source>
        <tissue>Cervix carcinoma</tissue>
    </source>
</reference>
<reference key="9">
    <citation type="journal article" date="2008" name="Proteomics">
        <title>Large-scale phosphoproteome analysis of human liver tissue by enrichment and fractionation of phosphopeptides with strong anion exchange chromatography.</title>
        <authorList>
            <person name="Han G."/>
            <person name="Ye M."/>
            <person name="Zhou H."/>
            <person name="Jiang X."/>
            <person name="Feng S."/>
            <person name="Jiang X."/>
            <person name="Tian R."/>
            <person name="Wan D."/>
            <person name="Zou H."/>
            <person name="Gu J."/>
        </authorList>
    </citation>
    <scope>PHOSPHORYLATION [LARGE SCALE ANALYSIS] AT SER-385</scope>
    <scope>IDENTIFICATION BY MASS SPECTROMETRY [LARGE SCALE ANALYSIS]</scope>
    <source>
        <tissue>Liver</tissue>
    </source>
</reference>
<reference key="10">
    <citation type="journal article" date="2009" name="Sci. Signal.">
        <title>Quantitative phosphoproteomic analysis of T cell receptor signaling reveals system-wide modulation of protein-protein interactions.</title>
        <authorList>
            <person name="Mayya V."/>
            <person name="Lundgren D.H."/>
            <person name="Hwang S.-I."/>
            <person name="Rezaul K."/>
            <person name="Wu L."/>
            <person name="Eng J.K."/>
            <person name="Rodionov V."/>
            <person name="Han D.K."/>
        </authorList>
    </citation>
    <scope>PHOSPHORYLATION [LARGE SCALE ANALYSIS] AT SER-344 AND SER-347</scope>
    <scope>IDENTIFICATION BY MASS SPECTROMETRY [LARGE SCALE ANALYSIS]</scope>
    <source>
        <tissue>Leukemic T-cell</tissue>
    </source>
</reference>
<reference key="11">
    <citation type="journal article" date="2010" name="Sci. Signal.">
        <title>Quantitative phosphoproteomics reveals widespread full phosphorylation site occupancy during mitosis.</title>
        <authorList>
            <person name="Olsen J.V."/>
            <person name="Vermeulen M."/>
            <person name="Santamaria A."/>
            <person name="Kumar C."/>
            <person name="Miller M.L."/>
            <person name="Jensen L.J."/>
            <person name="Gnad F."/>
            <person name="Cox J."/>
            <person name="Jensen T.S."/>
            <person name="Nigg E.A."/>
            <person name="Brunak S."/>
            <person name="Mann M."/>
        </authorList>
    </citation>
    <scope>PHOSPHORYLATION [LARGE SCALE ANALYSIS] AT SER-385</scope>
    <scope>IDENTIFICATION BY MASS SPECTROMETRY [LARGE SCALE ANALYSIS]</scope>
    <source>
        <tissue>Cervix carcinoma</tissue>
    </source>
</reference>
<reference key="12">
    <citation type="journal article" date="2011" name="Sci. Signal.">
        <title>System-wide temporal characterization of the proteome and phosphoproteome of human embryonic stem cell differentiation.</title>
        <authorList>
            <person name="Rigbolt K.T."/>
            <person name="Prokhorova T.A."/>
            <person name="Akimov V."/>
            <person name="Henningsen J."/>
            <person name="Johansen P.T."/>
            <person name="Kratchmarova I."/>
            <person name="Kassem M."/>
            <person name="Mann M."/>
            <person name="Olsen J.V."/>
            <person name="Blagoev B."/>
        </authorList>
    </citation>
    <scope>PHOSPHORYLATION [LARGE SCALE ANALYSIS] AT SER-385</scope>
    <scope>IDENTIFICATION BY MASS SPECTROMETRY [LARGE SCALE ANALYSIS]</scope>
</reference>
<reference key="13">
    <citation type="journal article" date="2013" name="J. Proteome Res.">
        <title>Toward a comprehensive characterization of a human cancer cell phosphoproteome.</title>
        <authorList>
            <person name="Zhou H."/>
            <person name="Di Palma S."/>
            <person name="Preisinger C."/>
            <person name="Peng M."/>
            <person name="Polat A.N."/>
            <person name="Heck A.J."/>
            <person name="Mohammed S."/>
        </authorList>
    </citation>
    <scope>PHOSPHORYLATION [LARGE SCALE ANALYSIS] AT SER-385</scope>
    <scope>IDENTIFICATION BY MASS SPECTROMETRY [LARGE SCALE ANALYSIS]</scope>
    <source>
        <tissue>Cervix carcinoma</tissue>
        <tissue>Erythroleukemia</tissue>
    </source>
</reference>
<reference key="14">
    <citation type="journal article" date="2014" name="J. Proteomics">
        <title>An enzyme assisted RP-RPLC approach for in-depth analysis of human liver phosphoproteome.</title>
        <authorList>
            <person name="Bian Y."/>
            <person name="Song C."/>
            <person name="Cheng K."/>
            <person name="Dong M."/>
            <person name="Wang F."/>
            <person name="Huang J."/>
            <person name="Sun D."/>
            <person name="Wang L."/>
            <person name="Ye M."/>
            <person name="Zou H."/>
        </authorList>
    </citation>
    <scope>PHOSPHORYLATION [LARGE SCALE ANALYSIS] AT SER-291; SER-311; SER-347 AND SER-385</scope>
    <scope>IDENTIFICATION BY MASS SPECTROMETRY [LARGE SCALE ANALYSIS]</scope>
    <source>
        <tissue>Liver</tissue>
    </source>
</reference>
<reference key="15">
    <citation type="journal article" date="2015" name="Nature">
        <title>Regulation of endoplasmic reticulum turnover by selective autophagy.</title>
        <authorList>
            <person name="Khaminets A."/>
            <person name="Heinrich T."/>
            <person name="Mari M."/>
            <person name="Grumati P."/>
            <person name="Huebner A.K."/>
            <person name="Akutsu M."/>
            <person name="Liebmann L."/>
            <person name="Stolz A."/>
            <person name="Nietzsche S."/>
            <person name="Koch N."/>
            <person name="Mauthe M."/>
            <person name="Katona I."/>
            <person name="Qualmann B."/>
            <person name="Weis J."/>
            <person name="Reggiori F."/>
            <person name="Kurth I."/>
            <person name="Huebner C.A."/>
            <person name="Dikic I."/>
        </authorList>
    </citation>
    <scope>INTERACTION WITH MAP1LC3A; MAP1LC3B; GABARAP AND GABARAPL1</scope>
    <scope>DOMAIN</scope>
</reference>
<reference key="16">
    <citation type="journal article" date="2021" name="EMBO Rep.">
        <title>Role of FAM134 paralogues in endoplasmic reticulum remodeling, ER-phagy, and Collagen quality control.</title>
        <authorList>
            <person name="Reggio A."/>
            <person name="Buonomo V."/>
            <person name="Berkane R."/>
            <person name="Bhaskara R.M."/>
            <person name="Tellechea M."/>
            <person name="Peluso I."/>
            <person name="Polishchuk E."/>
            <person name="Di Lorenzo G."/>
            <person name="Cirillo C."/>
            <person name="Esposito M."/>
            <person name="Hussain A."/>
            <person name="Huebner A.K."/>
            <person name="Huebner C.A."/>
            <person name="Settembre C."/>
            <person name="Hummer G."/>
            <person name="Grumati P."/>
            <person name="Stolz A."/>
        </authorList>
    </citation>
    <scope>FUNCTION</scope>
    <scope>INTERACTION WITH MAP1LC3A; MAP1LC3B; MAP1LC3C; GABARAP; GABARAPL1; GABARAPL2 AND CANX</scope>
    <scope>SUBCELLULAR LOCATION</scope>
    <scope>MUTAGENESIS OF 492-PHE--LEU-495</scope>
</reference>
<reference key="17">
    <citation type="journal article" date="2022" name="FEBS Open Bio">
        <title>The crystal structure of the FAM134B-GABARAP complex provides mechanistic insights into the selective binding of FAM134 to the GABARAP subfamily.</title>
        <authorList>
            <person name="Zhao J."/>
            <person name="Li Z."/>
            <person name="Li J."/>
        </authorList>
    </citation>
    <scope>INTERACTION WITH GABARAPL1 AND MAP1LC3B</scope>
</reference>
<organism>
    <name type="scientific">Homo sapiens</name>
    <name type="common">Human</name>
    <dbReference type="NCBI Taxonomy" id="9606"/>
    <lineage>
        <taxon>Eukaryota</taxon>
        <taxon>Metazoa</taxon>
        <taxon>Chordata</taxon>
        <taxon>Craniata</taxon>
        <taxon>Vertebrata</taxon>
        <taxon>Euteleostomi</taxon>
        <taxon>Mammalia</taxon>
        <taxon>Eutheria</taxon>
        <taxon>Euarchontoglires</taxon>
        <taxon>Primates</taxon>
        <taxon>Haplorrhini</taxon>
        <taxon>Catarrhini</taxon>
        <taxon>Hominidae</taxon>
        <taxon>Homo</taxon>
    </lineage>
</organism>
<dbReference type="EMBL" id="AK074983">
    <property type="protein sequence ID" value="BAC11332.1"/>
    <property type="molecule type" value="mRNA"/>
</dbReference>
<dbReference type="EMBL" id="AC068946">
    <property type="status" value="NOT_ANNOTATED_CDS"/>
    <property type="molecule type" value="Genomic_DNA"/>
</dbReference>
<dbReference type="EMBL" id="BC064950">
    <property type="protein sequence ID" value="AAH64950.1"/>
    <property type="molecule type" value="mRNA"/>
</dbReference>
<dbReference type="EMBL" id="AL136758">
    <property type="protein sequence ID" value="CAB66692.2"/>
    <property type="molecule type" value="mRNA"/>
</dbReference>
<dbReference type="CCDS" id="CCDS2434.1"/>
<dbReference type="RefSeq" id="NP_077269.3">
    <property type="nucleotide sequence ID" value="NM_024293.5"/>
</dbReference>
<dbReference type="PDB" id="6EWC">
    <property type="method" value="X-ray"/>
    <property type="resolution" value="3.20 A"/>
    <property type="chains" value="C/G=400-408"/>
</dbReference>
<dbReference type="PDBsum" id="6EWC"/>
<dbReference type="SMR" id="Q8NC44"/>
<dbReference type="BioGRID" id="122558">
    <property type="interactions" value="51"/>
</dbReference>
<dbReference type="DIP" id="DIP-56781N"/>
<dbReference type="FunCoup" id="Q8NC44">
    <property type="interactions" value="1830"/>
</dbReference>
<dbReference type="IntAct" id="Q8NC44">
    <property type="interactions" value="38"/>
</dbReference>
<dbReference type="MINT" id="Q8NC44"/>
<dbReference type="STRING" id="9606.ENSP00000395249"/>
<dbReference type="iPTMnet" id="Q8NC44"/>
<dbReference type="PhosphoSitePlus" id="Q8NC44"/>
<dbReference type="BioMuta" id="RETREG2"/>
<dbReference type="DMDM" id="296439357"/>
<dbReference type="jPOST" id="Q8NC44"/>
<dbReference type="MassIVE" id="Q8NC44"/>
<dbReference type="PaxDb" id="9606-ENSP00000395249"/>
<dbReference type="PeptideAtlas" id="Q8NC44"/>
<dbReference type="ProteomicsDB" id="72849"/>
<dbReference type="Pumba" id="Q8NC44"/>
<dbReference type="Antibodypedia" id="2502">
    <property type="antibodies" value="42 antibodies from 15 providers"/>
</dbReference>
<dbReference type="DNASU" id="79137"/>
<dbReference type="Ensembl" id="ENST00000430297.7">
    <property type="protein sequence ID" value="ENSP00000395249.2"/>
    <property type="gene ID" value="ENSG00000144567.11"/>
</dbReference>
<dbReference type="GeneID" id="79137"/>
<dbReference type="KEGG" id="hsa:79137"/>
<dbReference type="MANE-Select" id="ENST00000430297.7">
    <property type="protein sequence ID" value="ENSP00000395249.2"/>
    <property type="RefSeq nucleotide sequence ID" value="NM_024293.6"/>
    <property type="RefSeq protein sequence ID" value="NP_077269.3"/>
</dbReference>
<dbReference type="UCSC" id="uc002vjw.5">
    <property type="organism name" value="human"/>
</dbReference>
<dbReference type="AGR" id="HGNC:28450"/>
<dbReference type="CTD" id="79137"/>
<dbReference type="DisGeNET" id="79137"/>
<dbReference type="GeneCards" id="RETREG2"/>
<dbReference type="HGNC" id="HGNC:28450">
    <property type="gene designation" value="RETREG2"/>
</dbReference>
<dbReference type="HPA" id="ENSG00000144567">
    <property type="expression patterns" value="Low tissue specificity"/>
</dbReference>
<dbReference type="neXtProt" id="NX_Q8NC44"/>
<dbReference type="OpenTargets" id="ENSG00000144567"/>
<dbReference type="PharmGKB" id="PA162386165"/>
<dbReference type="VEuPathDB" id="HostDB:ENSG00000144567"/>
<dbReference type="eggNOG" id="ENOG502QPTN">
    <property type="taxonomic scope" value="Eukaryota"/>
</dbReference>
<dbReference type="GeneTree" id="ENSGT00940000162511"/>
<dbReference type="HOGENOM" id="CLU_036265_2_1_1"/>
<dbReference type="InParanoid" id="Q8NC44"/>
<dbReference type="OMA" id="EKWKPRF"/>
<dbReference type="OrthoDB" id="10029527at2759"/>
<dbReference type="PAN-GO" id="Q8NC44">
    <property type="GO annotations" value="1 GO annotation based on evolutionary models"/>
</dbReference>
<dbReference type="PhylomeDB" id="Q8NC44"/>
<dbReference type="TreeFam" id="TF329111"/>
<dbReference type="PathwayCommons" id="Q8NC44"/>
<dbReference type="SignaLink" id="Q8NC44"/>
<dbReference type="BioGRID-ORCS" id="79137">
    <property type="hits" value="8 hits in 1155 CRISPR screens"/>
</dbReference>
<dbReference type="ChiTaRS" id="FAM134A">
    <property type="organism name" value="human"/>
</dbReference>
<dbReference type="GenomeRNAi" id="79137"/>
<dbReference type="Pharos" id="Q8NC44">
    <property type="development level" value="Tdark"/>
</dbReference>
<dbReference type="PRO" id="PR:Q8NC44"/>
<dbReference type="Proteomes" id="UP000005640">
    <property type="component" value="Chromosome 2"/>
</dbReference>
<dbReference type="RNAct" id="Q8NC44">
    <property type="molecule type" value="protein"/>
</dbReference>
<dbReference type="Bgee" id="ENSG00000144567">
    <property type="expression patterns" value="Expressed in sperm and 198 other cell types or tissues"/>
</dbReference>
<dbReference type="ExpressionAtlas" id="Q8NC44">
    <property type="expression patterns" value="baseline and differential"/>
</dbReference>
<dbReference type="GO" id="GO:0005789">
    <property type="term" value="C:endoplasmic reticulum membrane"/>
    <property type="evidence" value="ECO:0007669"/>
    <property type="project" value="UniProtKB-SubCell"/>
</dbReference>
<dbReference type="GO" id="GO:0016020">
    <property type="term" value="C:membrane"/>
    <property type="evidence" value="ECO:0000318"/>
    <property type="project" value="GO_Central"/>
</dbReference>
<dbReference type="GO" id="GO:0140506">
    <property type="term" value="F:endoplasmic reticulum-autophagosome adaptor activity"/>
    <property type="evidence" value="ECO:0007669"/>
    <property type="project" value="Ensembl"/>
</dbReference>
<dbReference type="GO" id="GO:0030574">
    <property type="term" value="P:collagen catabolic process"/>
    <property type="evidence" value="ECO:0007669"/>
    <property type="project" value="Ensembl"/>
</dbReference>
<dbReference type="GO" id="GO:0007029">
    <property type="term" value="P:endoplasmic reticulum organization"/>
    <property type="evidence" value="ECO:0007669"/>
    <property type="project" value="Ensembl"/>
</dbReference>
<dbReference type="GO" id="GO:0061709">
    <property type="term" value="P:reticulophagy"/>
    <property type="evidence" value="ECO:0007669"/>
    <property type="project" value="Ensembl"/>
</dbReference>
<dbReference type="CDD" id="cd22561">
    <property type="entry name" value="RETR2_RHD"/>
    <property type="match status" value="1"/>
</dbReference>
<dbReference type="InterPro" id="IPR052114">
    <property type="entry name" value="ER_autophagy_membrane_reg"/>
</dbReference>
<dbReference type="InterPro" id="IPR055257">
    <property type="entry name" value="RETR2_RHD"/>
</dbReference>
<dbReference type="PANTHER" id="PTHR20952">
    <property type="entry name" value="ADP-RIBOSYLATION-LIKE FACTOR 6-INTERACTING PROTEIN"/>
    <property type="match status" value="1"/>
</dbReference>
<dbReference type="PANTHER" id="PTHR20952:SF4">
    <property type="entry name" value="RETICULOPHAGY REGULATOR 2"/>
    <property type="match status" value="1"/>
</dbReference>
<dbReference type="Pfam" id="PF24456">
    <property type="entry name" value="RHD_RETREG1-3"/>
    <property type="match status" value="1"/>
</dbReference>
<proteinExistence type="evidence at protein level"/>
<gene>
    <name evidence="11" type="primary">RETREG2</name>
    <name type="synonym">C2orf17</name>
    <name type="synonym">FAM134A</name>
    <name evidence="11" type="synonym">MAG2</name>
</gene>
<keyword id="KW-0002">3D-structure</keyword>
<keyword id="KW-0072">Autophagy</keyword>
<keyword id="KW-0256">Endoplasmic reticulum</keyword>
<keyword id="KW-0472">Membrane</keyword>
<keyword id="KW-0597">Phosphoprotein</keyword>
<keyword id="KW-1267">Proteomics identification</keyword>
<keyword id="KW-1185">Reference proteome</keyword>
<keyword id="KW-0812">Transmembrane</keyword>
<keyword id="KW-1133">Transmembrane helix</keyword>
<comment type="function">
    <text evidence="1 7">Endoplasmic reticulum (ER)-anchored autophagy regulator which exists in an inactive state under basal conditions but is activated following cellular stress (PubMed:34338405). When activated, induces ER fragmentation and mediates ER delivery into lysosomes through sequestration into autophagosomes via interaction with ATG8 family proteins (PubMed:34338405). Required for collagen quality control in a LIR motif-independent manner (By similarity).</text>
</comment>
<comment type="subunit">
    <text evidence="6 7 8">Interacts with ATG8 family modifier proteins MAP1LC3A, MAP1LC3B, MAP1LC3C, GABARAP, GABARAPL1 and GABARAPL2 (PubMed:26040720, PubMed:34338405, PubMed:34854256). Shows higher affinity for GABARAPL1 than for MAP1LC3B (PubMed:34854256). Interacts with CANX (PubMed:34338405).</text>
</comment>
<comment type="interaction">
    <interactant intactId="EBI-712899">
        <id>Q8NC44</id>
    </interactant>
    <interactant intactId="EBI-373144">
        <id>Q9GZQ8</id>
        <label>MAP1LC3B</label>
    </interactant>
    <organismsDiffer>false</organismsDiffer>
    <experiments>2</experiments>
</comment>
<comment type="subcellular location">
    <subcellularLocation>
        <location evidence="7">Endoplasmic reticulum membrane</location>
        <topology evidence="2">Multi-pass membrane protein</topology>
    </subcellularLocation>
</comment>
<comment type="domain">
    <text evidence="6 7">The LIR motif interacts with ATG8 family proteins.</text>
</comment>
<comment type="similarity">
    <text evidence="9">Belongs to the RETREG family.</text>
</comment>
<name>RETR2_HUMAN</name>